<geneLocation type="plasmid">
    <name>unnamed</name>
</geneLocation>
<evidence type="ECO:0000269" key="1">
    <source>
    </source>
</evidence>
<evidence type="ECO:0000269" key="2">
    <source>
    </source>
</evidence>
<evidence type="ECO:0000303" key="3">
    <source>
    </source>
</evidence>
<evidence type="ECO:0000303" key="4">
    <source>
    </source>
</evidence>
<evidence type="ECO:0000305" key="5"/>
<evidence type="ECO:0000305" key="6">
    <source>
    </source>
</evidence>
<evidence type="ECO:0007829" key="7">
    <source>
        <dbReference type="PDB" id="1I5P"/>
    </source>
</evidence>
<dbReference type="EMBL" id="M23723">
    <property type="protein sequence ID" value="AAA83516.1"/>
    <property type="molecule type" value="Genomic_DNA"/>
</dbReference>
<dbReference type="EMBL" id="M31738">
    <property type="protein sequence ID" value="AAA22335.1"/>
    <property type="molecule type" value="Genomic_DNA"/>
</dbReference>
<dbReference type="PIR" id="C32053">
    <property type="entry name" value="C32053"/>
</dbReference>
<dbReference type="PDB" id="1I5P">
    <property type="method" value="X-ray"/>
    <property type="resolution" value="2.20 A"/>
    <property type="chains" value="A=1-633"/>
</dbReference>
<dbReference type="PDBsum" id="1I5P"/>
<dbReference type="SMR" id="P0A377"/>
<dbReference type="EvolutionaryTrace" id="P0A377"/>
<dbReference type="GO" id="GO:0005102">
    <property type="term" value="F:signaling receptor binding"/>
    <property type="evidence" value="ECO:0007669"/>
    <property type="project" value="InterPro"/>
</dbReference>
<dbReference type="GO" id="GO:0090729">
    <property type="term" value="F:toxin activity"/>
    <property type="evidence" value="ECO:0007669"/>
    <property type="project" value="UniProtKB-KW"/>
</dbReference>
<dbReference type="GO" id="GO:0030435">
    <property type="term" value="P:sporulation resulting in formation of a cellular spore"/>
    <property type="evidence" value="ECO:0007669"/>
    <property type="project" value="UniProtKB-KW"/>
</dbReference>
<dbReference type="GO" id="GO:0001907">
    <property type="term" value="P:symbiont-mediated killing of host cell"/>
    <property type="evidence" value="ECO:0007669"/>
    <property type="project" value="InterPro"/>
</dbReference>
<dbReference type="Gene3D" id="2.60.120.260">
    <property type="entry name" value="Galactose-binding domain-like"/>
    <property type="match status" value="1"/>
</dbReference>
<dbReference type="Gene3D" id="2.100.10.10">
    <property type="entry name" value="Pesticidal crystal protein, central domain"/>
    <property type="match status" value="1"/>
</dbReference>
<dbReference type="Gene3D" id="1.20.190.10">
    <property type="entry name" value="Pesticidal crystal protein, N-terminal domain"/>
    <property type="match status" value="1"/>
</dbReference>
<dbReference type="InterPro" id="IPR008979">
    <property type="entry name" value="Galactose-bd-like_sf"/>
</dbReference>
<dbReference type="InterPro" id="IPR038979">
    <property type="entry name" value="Pest_crys"/>
</dbReference>
<dbReference type="InterPro" id="IPR005638">
    <property type="entry name" value="Pest_crys_dom-III"/>
</dbReference>
<dbReference type="InterPro" id="IPR005639">
    <property type="entry name" value="Pest_crys_dom_I"/>
</dbReference>
<dbReference type="InterPro" id="IPR036716">
    <property type="entry name" value="Pest_crys_N_sf"/>
</dbReference>
<dbReference type="InterPro" id="IPR015214">
    <property type="entry name" value="Pest_cryst_cen_dom_Cry2A/18"/>
</dbReference>
<dbReference type="InterPro" id="IPR036399">
    <property type="entry name" value="Pest_cryst_cen_dom_sf"/>
</dbReference>
<dbReference type="PANTHER" id="PTHR37003">
    <property type="entry name" value="ENDOTOXIN_N DOMAIN-CONTAINING PROTEIN-RELATED"/>
    <property type="match status" value="1"/>
</dbReference>
<dbReference type="PANTHER" id="PTHR37003:SF2">
    <property type="entry name" value="PESTICIDAL CRYSTAL PROTEIN N-TERMINAL DOMAIN-CONTAINING PROTEIN"/>
    <property type="match status" value="1"/>
</dbReference>
<dbReference type="Pfam" id="PF03944">
    <property type="entry name" value="Endotoxin_C"/>
    <property type="match status" value="1"/>
</dbReference>
<dbReference type="Pfam" id="PF09131">
    <property type="entry name" value="Endotoxin_mid"/>
    <property type="match status" value="1"/>
</dbReference>
<dbReference type="Pfam" id="PF03945">
    <property type="entry name" value="Endotoxin_N"/>
    <property type="match status" value="1"/>
</dbReference>
<dbReference type="SUPFAM" id="SSF51096">
    <property type="entry name" value="delta-Endotoxin (insectocide), middle domain"/>
    <property type="match status" value="1"/>
</dbReference>
<dbReference type="SUPFAM" id="SSF56849">
    <property type="entry name" value="delta-Endotoxin (insectocide), N-terminal domain"/>
    <property type="match status" value="1"/>
</dbReference>
<dbReference type="SUPFAM" id="SSF49785">
    <property type="entry name" value="Galactose-binding domain-like"/>
    <property type="match status" value="1"/>
</dbReference>
<gene>
    <name type="primary">cry2Aa</name>
    <name evidence="3" type="synonym">cryB1</name>
    <name type="synonym">cryII</name>
    <name type="synonym">cryIIA(a)</name>
</gene>
<sequence>MNNVLNSGRTTICDAYNVVAHDPFSFEHKSLDTIQKEWMEWKRTDHSLYVAPVVGTVSSFLLKKVGSLIGKRILSELWGIIFPSGSTNLMQDILRETEQFLNQRLNTDTLARVNAELIGLQANIREFNQQVDNFLNPTQNPVPLSITSSVNTMQQLFLNRLPQFQIQGYQLLLLPLFAQAANMHLSFIRDVILNADEWGISAATLRTYRDYLRNYTRDYSNYCINTYQTAFRGLNTRLHDMLEFRTYMFLNVFEYVSIWSLFKYQSLMVSSGANLYASGSGPQQTQSFTAQNWPFLYSLFQVNSNYILSGISGTRLSITFPNIGGLPGSTTTHSLNSARVNYSGGVSSGLIGATNLNHNFNCSTVLPPLSTPFVRSWLDSGTDREGVATSTNWQTESFQTTLSLRCGAFSARGNSNYFPDYFIRNISGVPLVIRNEDLTRPLHYNQIRNIESPSGTPGGARAYLVSVHNRKNNIYAANENGTMIHLAPEDYTGFTISPIHATQVNNQTRTFISEKFGNQGDSLRFEQSNTTARYTLRGNGNSYNLYLRVSSIGNSTIRVTINGRVYTVSNVNTTTNNDGVNDNGARFSDINIGNIVASDNTNVTLDINVTLNSGTPFDLMNIMFVPTNLPPLY</sequence>
<comment type="function">
    <text evidence="1">Promotes colloidosmotic lysis by binding to the midgut epithelial cells of both dipteran (Aedes aegypti) and lepidopteran (Manduca sexta) larvae.</text>
</comment>
<comment type="developmental stage">
    <text>The crystal protein is produced during sporulation and is accumulated both as an inclusion and as part of the spore coat.</text>
</comment>
<comment type="induction">
    <text evidence="6">Transcribed starting in early sporulation and into later stages; not expressed during vegetative growth. Third gene in the orf1-orf2-cry2Aa (cryB1) operon.</text>
</comment>
<comment type="miscellaneous">
    <text>Toxic segment of the protein is located in the N-terminus.</text>
</comment>
<comment type="miscellaneous">
    <text evidence="1">Encoded on an unnamed 225 kb plasmid.</text>
</comment>
<comment type="similarity">
    <text evidence="5">Belongs to the delta endotoxin family.</text>
</comment>
<protein>
    <recommendedName>
        <fullName>Pesticidal crystal protein Cry2Aa</fullName>
    </recommendedName>
    <alternativeName>
        <fullName>71 kDa crystal protein</fullName>
    </alternativeName>
    <alternativeName>
        <fullName>Crystaline entomocidal protoxin</fullName>
    </alternativeName>
    <alternativeName>
        <fullName>Insecticidal delta-endotoxin CryIIA(a)</fullName>
    </alternativeName>
    <alternativeName>
        <fullName>Mosquito factor</fullName>
    </alternativeName>
    <alternativeName>
        <fullName evidence="4">P2 crystal protein</fullName>
    </alternativeName>
</protein>
<name>CR2AA_BACTK</name>
<organism>
    <name type="scientific">Bacillus thuringiensis subsp. kurstaki</name>
    <dbReference type="NCBI Taxonomy" id="29339"/>
    <lineage>
        <taxon>Bacteria</taxon>
        <taxon>Bacillati</taxon>
        <taxon>Bacillota</taxon>
        <taxon>Bacilli</taxon>
        <taxon>Bacillales</taxon>
        <taxon>Bacillaceae</taxon>
        <taxon>Bacillus</taxon>
        <taxon>Bacillus cereus group</taxon>
    </lineage>
</organism>
<accession>P0A377</accession>
<accession>O52764</accession>
<accession>P21253</accession>
<proteinExistence type="evidence at protein level"/>
<reference key="1">
    <citation type="journal article" date="1989" name="J. Bacteriol.">
        <title>Two highly related insecticidal crystal proteins of Bacillus thuringiensis subsp. kurstaki possess different host range specificities.</title>
        <authorList>
            <person name="Widner W.R."/>
            <person name="Whiteley H.R."/>
        </authorList>
    </citation>
    <scope>NUCLEOTIDE SEQUENCE [GENOMIC DNA]</scope>
    <scope>INSECT TOXICITY</scope>
    <scope>INDUCTION</scope>
    <scope>OPERON</scope>
    <source>
        <strain>HD-1</strain>
    </source>
</reference>
<reference key="2">
    <citation type="journal article" date="1988" name="J. Biol. Chem.">
        <title>Amino acid sequence and entomocidal activity of the P2 crystal protein. An insect toxin from Bacillus thuringiensis var. kurstaki.</title>
        <authorList>
            <person name="Donovan W.P."/>
            <person name="Dankocsik C.C."/>
            <person name="Gilbert M.P."/>
            <person name="Gawron-Burke M.C."/>
            <person name="Groat R.G."/>
            <person name="Carlton B.C."/>
        </authorList>
    </citation>
    <scope>NUCLEOTIDE SEQUENCE [GENOMIC DNA]</scope>
    <scope>PROTEIN SEQUENCE OF 1-26</scope>
    <source>
        <strain>HD-1</strain>
        <strain>HD-263</strain>
    </source>
</reference>
<reference key="3">
    <citation type="journal article" date="1989" name="J. Biol. Chem.">
        <authorList>
            <person name="Donovan W.P."/>
            <person name="Dankocsik C.C."/>
            <person name="Gilbert M.P."/>
            <person name="Gawron-Burke M.C."/>
            <person name="Groat R.G."/>
            <person name="Carlton B.C."/>
        </authorList>
    </citation>
    <scope>ERRATUM OF PUBMED:3121615</scope>
    <scope>SEQUENCE REVISION</scope>
</reference>
<reference key="4">
    <citation type="journal article" date="2001" name="Structure">
        <title>Structure of Cry2Aa suggests an unexpected receptor binding epitope.</title>
        <authorList>
            <person name="Morse R.J."/>
            <person name="Yamamoto T."/>
            <person name="Stroud R.M."/>
        </authorList>
    </citation>
    <scope>X-RAY CRYSTALLOGRAPHY (2.2 ANGSTROMS)</scope>
</reference>
<feature type="chain" id="PRO_0000174055" description="Pesticidal crystal protein Cry2Aa">
    <location>
        <begin position="1"/>
        <end position="633"/>
    </location>
</feature>
<feature type="sequence variant" description="In 50% of the molecules." evidence="2">
    <location>
        <position position="1"/>
    </location>
</feature>
<feature type="turn" evidence="7">
    <location>
        <begin position="16"/>
        <end position="18"/>
    </location>
</feature>
<feature type="helix" evidence="7">
    <location>
        <begin position="25"/>
        <end position="28"/>
    </location>
</feature>
<feature type="helix" evidence="7">
    <location>
        <begin position="31"/>
        <end position="44"/>
    </location>
</feature>
<feature type="helix" evidence="7">
    <location>
        <begin position="53"/>
        <end position="65"/>
    </location>
</feature>
<feature type="helix" evidence="7">
    <location>
        <begin position="74"/>
        <end position="81"/>
    </location>
</feature>
<feature type="helix" evidence="7">
    <location>
        <begin position="83"/>
        <end position="85"/>
    </location>
</feature>
<feature type="helix" evidence="7">
    <location>
        <begin position="88"/>
        <end position="101"/>
    </location>
</feature>
<feature type="helix" evidence="7">
    <location>
        <begin position="107"/>
        <end position="135"/>
    </location>
</feature>
<feature type="strand" evidence="7">
    <location>
        <begin position="138"/>
        <end position="140"/>
    </location>
</feature>
<feature type="helix" evidence="7">
    <location>
        <begin position="145"/>
        <end position="160"/>
    </location>
</feature>
<feature type="helix" evidence="7">
    <location>
        <begin position="161"/>
        <end position="164"/>
    </location>
</feature>
<feature type="helix" evidence="7">
    <location>
        <begin position="170"/>
        <end position="193"/>
    </location>
</feature>
<feature type="helix" evidence="7">
    <location>
        <begin position="195"/>
        <end position="198"/>
    </location>
</feature>
<feature type="helix" evidence="7">
    <location>
        <begin position="202"/>
        <end position="232"/>
    </location>
</feature>
<feature type="strand" evidence="7">
    <location>
        <begin position="235"/>
        <end position="237"/>
    </location>
</feature>
<feature type="helix" evidence="7">
    <location>
        <begin position="238"/>
        <end position="251"/>
    </location>
</feature>
<feature type="helix" evidence="7">
    <location>
        <begin position="253"/>
        <end position="259"/>
    </location>
</feature>
<feature type="turn" evidence="7">
    <location>
        <begin position="260"/>
        <end position="263"/>
    </location>
</feature>
<feature type="strand" evidence="7">
    <location>
        <begin position="265"/>
        <end position="268"/>
    </location>
</feature>
<feature type="strand" evidence="7">
    <location>
        <begin position="275"/>
        <end position="278"/>
    </location>
</feature>
<feature type="strand" evidence="7">
    <location>
        <begin position="281"/>
        <end position="283"/>
    </location>
</feature>
<feature type="strand" evidence="7">
    <location>
        <begin position="287"/>
        <end position="289"/>
    </location>
</feature>
<feature type="helix" evidence="7">
    <location>
        <begin position="290"/>
        <end position="292"/>
    </location>
</feature>
<feature type="helix" evidence="7">
    <location>
        <begin position="293"/>
        <end position="300"/>
    </location>
</feature>
<feature type="turn" evidence="7">
    <location>
        <begin position="301"/>
        <end position="305"/>
    </location>
</feature>
<feature type="strand" evidence="7">
    <location>
        <begin position="308"/>
        <end position="321"/>
    </location>
</feature>
<feature type="strand" evidence="7">
    <location>
        <begin position="328"/>
        <end position="342"/>
    </location>
</feature>
<feature type="helix" evidence="7">
    <location>
        <begin position="343"/>
        <end position="345"/>
    </location>
</feature>
<feature type="strand" evidence="7">
    <location>
        <begin position="354"/>
        <end position="356"/>
    </location>
</feature>
<feature type="strand" evidence="7">
    <location>
        <begin position="360"/>
        <end position="363"/>
    </location>
</feature>
<feature type="turn" evidence="7">
    <location>
        <begin position="368"/>
        <end position="370"/>
    </location>
</feature>
<feature type="strand" evidence="7">
    <location>
        <begin position="373"/>
        <end position="377"/>
    </location>
</feature>
<feature type="strand" evidence="7">
    <location>
        <begin position="381"/>
        <end position="385"/>
    </location>
</feature>
<feature type="turn" evidence="7">
    <location>
        <begin position="386"/>
        <end position="388"/>
    </location>
</feature>
<feature type="strand" evidence="7">
    <location>
        <begin position="389"/>
        <end position="393"/>
    </location>
</feature>
<feature type="strand" evidence="7">
    <location>
        <begin position="397"/>
        <end position="403"/>
    </location>
</feature>
<feature type="strand" evidence="7">
    <location>
        <begin position="405"/>
        <end position="409"/>
    </location>
</feature>
<feature type="strand" evidence="7">
    <location>
        <begin position="422"/>
        <end position="432"/>
    </location>
</feature>
<feature type="helix" evidence="7">
    <location>
        <begin position="435"/>
        <end position="438"/>
    </location>
</feature>
<feature type="strand" evidence="7">
    <location>
        <begin position="462"/>
        <end position="469"/>
    </location>
</feature>
<feature type="strand" evidence="7">
    <location>
        <begin position="474"/>
        <end position="477"/>
    </location>
</feature>
<feature type="strand" evidence="7">
    <location>
        <begin position="481"/>
        <end position="486"/>
    </location>
</feature>
<feature type="strand" evidence="7">
    <location>
        <begin position="489"/>
        <end position="491"/>
    </location>
</feature>
<feature type="strand" evidence="7">
    <location>
        <begin position="493"/>
        <end position="496"/>
    </location>
</feature>
<feature type="strand" evidence="7">
    <location>
        <begin position="502"/>
        <end position="506"/>
    </location>
</feature>
<feature type="helix" evidence="7">
    <location>
        <begin position="507"/>
        <end position="509"/>
    </location>
</feature>
<feature type="strand" evidence="7">
    <location>
        <begin position="510"/>
        <end position="513"/>
    </location>
</feature>
<feature type="strand" evidence="7">
    <location>
        <begin position="516"/>
        <end position="520"/>
    </location>
</feature>
<feature type="strand" evidence="7">
    <location>
        <begin position="522"/>
        <end position="525"/>
    </location>
</feature>
<feature type="strand" evidence="7">
    <location>
        <begin position="527"/>
        <end position="537"/>
    </location>
</feature>
<feature type="strand" evidence="7">
    <location>
        <begin position="542"/>
        <end position="550"/>
    </location>
</feature>
<feature type="strand" evidence="7">
    <location>
        <begin position="555"/>
        <end position="561"/>
    </location>
</feature>
<feature type="strand" evidence="7">
    <location>
        <begin position="564"/>
        <end position="571"/>
    </location>
</feature>
<feature type="strand" evidence="7">
    <location>
        <begin position="574"/>
        <end position="577"/>
    </location>
</feature>
<feature type="strand" evidence="7">
    <location>
        <begin position="588"/>
        <end position="596"/>
    </location>
</feature>
<feature type="strand" evidence="7">
    <location>
        <begin position="601"/>
        <end position="610"/>
    </location>
</feature>
<feature type="strand" evidence="7">
    <location>
        <begin position="617"/>
        <end position="626"/>
    </location>
</feature>
<keyword id="KW-0002">3D-structure</keyword>
<keyword id="KW-0903">Direct protein sequencing</keyword>
<keyword id="KW-0614">Plasmid</keyword>
<keyword id="KW-0749">Sporulation</keyword>
<keyword id="KW-0800">Toxin</keyword>
<keyword id="KW-0843">Virulence</keyword>